<sequence>MGQKINPIGLRLGINRTWDSRWFAGKAEYGKLLHEDVKIREILHKELKQAAVARIVIERPHKKCRVTIHSARPGVVIGKKGADIDKLRKRVADITSSDVVINIVEIRKPELDATLVAESIAQQLERRVAFRRAMKRAVQSAMRLGAEGIRINCSGRLGGAEIARMEWYREGRVPLHTLRADIDYGVATAFTTFGTCGVKVWIFKGEILEHDPMAQDKRMNEGGGESPSPRSRRDAA</sequence>
<dbReference type="EMBL" id="CU234118">
    <property type="protein sequence ID" value="CAL76874.1"/>
    <property type="molecule type" value="Genomic_DNA"/>
</dbReference>
<dbReference type="RefSeq" id="WP_006611844.1">
    <property type="nucleotide sequence ID" value="NC_009445.1"/>
</dbReference>
<dbReference type="SMR" id="A4YSJ8"/>
<dbReference type="STRING" id="114615.BRADO3072"/>
<dbReference type="KEGG" id="bra:BRADO3072"/>
<dbReference type="eggNOG" id="COG0092">
    <property type="taxonomic scope" value="Bacteria"/>
</dbReference>
<dbReference type="HOGENOM" id="CLU_058591_0_2_5"/>
<dbReference type="OrthoDB" id="9806396at2"/>
<dbReference type="Proteomes" id="UP000001994">
    <property type="component" value="Chromosome"/>
</dbReference>
<dbReference type="GO" id="GO:0022627">
    <property type="term" value="C:cytosolic small ribosomal subunit"/>
    <property type="evidence" value="ECO:0007669"/>
    <property type="project" value="TreeGrafter"/>
</dbReference>
<dbReference type="GO" id="GO:0003729">
    <property type="term" value="F:mRNA binding"/>
    <property type="evidence" value="ECO:0007669"/>
    <property type="project" value="UniProtKB-UniRule"/>
</dbReference>
<dbReference type="GO" id="GO:0019843">
    <property type="term" value="F:rRNA binding"/>
    <property type="evidence" value="ECO:0007669"/>
    <property type="project" value="UniProtKB-UniRule"/>
</dbReference>
<dbReference type="GO" id="GO:0003735">
    <property type="term" value="F:structural constituent of ribosome"/>
    <property type="evidence" value="ECO:0007669"/>
    <property type="project" value="InterPro"/>
</dbReference>
<dbReference type="GO" id="GO:0006412">
    <property type="term" value="P:translation"/>
    <property type="evidence" value="ECO:0007669"/>
    <property type="project" value="UniProtKB-UniRule"/>
</dbReference>
<dbReference type="CDD" id="cd02412">
    <property type="entry name" value="KH-II_30S_S3"/>
    <property type="match status" value="1"/>
</dbReference>
<dbReference type="FunFam" id="3.30.1140.32:FF:000009">
    <property type="entry name" value="30S ribosomal protein S3"/>
    <property type="match status" value="1"/>
</dbReference>
<dbReference type="FunFam" id="3.30.300.20:FF:000001">
    <property type="entry name" value="30S ribosomal protein S3"/>
    <property type="match status" value="1"/>
</dbReference>
<dbReference type="Gene3D" id="3.30.300.20">
    <property type="match status" value="1"/>
</dbReference>
<dbReference type="Gene3D" id="3.30.1140.32">
    <property type="entry name" value="Ribosomal protein S3, C-terminal domain"/>
    <property type="match status" value="1"/>
</dbReference>
<dbReference type="HAMAP" id="MF_01309_B">
    <property type="entry name" value="Ribosomal_uS3_B"/>
    <property type="match status" value="1"/>
</dbReference>
<dbReference type="InterPro" id="IPR004087">
    <property type="entry name" value="KH_dom"/>
</dbReference>
<dbReference type="InterPro" id="IPR015946">
    <property type="entry name" value="KH_dom-like_a/b"/>
</dbReference>
<dbReference type="InterPro" id="IPR004044">
    <property type="entry name" value="KH_dom_type_2"/>
</dbReference>
<dbReference type="InterPro" id="IPR009019">
    <property type="entry name" value="KH_sf_prok-type"/>
</dbReference>
<dbReference type="InterPro" id="IPR036419">
    <property type="entry name" value="Ribosomal_S3_C_sf"/>
</dbReference>
<dbReference type="InterPro" id="IPR005704">
    <property type="entry name" value="Ribosomal_uS3_bac-typ"/>
</dbReference>
<dbReference type="InterPro" id="IPR001351">
    <property type="entry name" value="Ribosomal_uS3_C"/>
</dbReference>
<dbReference type="InterPro" id="IPR018280">
    <property type="entry name" value="Ribosomal_uS3_CS"/>
</dbReference>
<dbReference type="NCBIfam" id="TIGR01009">
    <property type="entry name" value="rpsC_bact"/>
    <property type="match status" value="1"/>
</dbReference>
<dbReference type="PANTHER" id="PTHR11760">
    <property type="entry name" value="30S/40S RIBOSOMAL PROTEIN S3"/>
    <property type="match status" value="1"/>
</dbReference>
<dbReference type="PANTHER" id="PTHR11760:SF19">
    <property type="entry name" value="SMALL RIBOSOMAL SUBUNIT PROTEIN US3C"/>
    <property type="match status" value="1"/>
</dbReference>
<dbReference type="Pfam" id="PF07650">
    <property type="entry name" value="KH_2"/>
    <property type="match status" value="1"/>
</dbReference>
<dbReference type="Pfam" id="PF00189">
    <property type="entry name" value="Ribosomal_S3_C"/>
    <property type="match status" value="1"/>
</dbReference>
<dbReference type="SMART" id="SM00322">
    <property type="entry name" value="KH"/>
    <property type="match status" value="1"/>
</dbReference>
<dbReference type="SUPFAM" id="SSF54814">
    <property type="entry name" value="Prokaryotic type KH domain (KH-domain type II)"/>
    <property type="match status" value="1"/>
</dbReference>
<dbReference type="SUPFAM" id="SSF54821">
    <property type="entry name" value="Ribosomal protein S3 C-terminal domain"/>
    <property type="match status" value="1"/>
</dbReference>
<dbReference type="PROSITE" id="PS50823">
    <property type="entry name" value="KH_TYPE_2"/>
    <property type="match status" value="1"/>
</dbReference>
<dbReference type="PROSITE" id="PS00548">
    <property type="entry name" value="RIBOSOMAL_S3"/>
    <property type="match status" value="1"/>
</dbReference>
<protein>
    <recommendedName>
        <fullName evidence="1">Small ribosomal subunit protein uS3</fullName>
    </recommendedName>
    <alternativeName>
        <fullName evidence="3">30S ribosomal protein S3</fullName>
    </alternativeName>
</protein>
<feature type="chain" id="PRO_0000293760" description="Small ribosomal subunit protein uS3">
    <location>
        <begin position="1"/>
        <end position="236"/>
    </location>
</feature>
<feature type="domain" description="KH type-2" evidence="1">
    <location>
        <begin position="39"/>
        <end position="107"/>
    </location>
</feature>
<feature type="region of interest" description="Disordered" evidence="2">
    <location>
        <begin position="213"/>
        <end position="236"/>
    </location>
</feature>
<name>RS3_BRASO</name>
<accession>A4YSJ8</accession>
<keyword id="KW-1185">Reference proteome</keyword>
<keyword id="KW-0687">Ribonucleoprotein</keyword>
<keyword id="KW-0689">Ribosomal protein</keyword>
<keyword id="KW-0694">RNA-binding</keyword>
<keyword id="KW-0699">rRNA-binding</keyword>
<proteinExistence type="inferred from homology"/>
<organism>
    <name type="scientific">Bradyrhizobium sp. (strain ORS 278)</name>
    <dbReference type="NCBI Taxonomy" id="114615"/>
    <lineage>
        <taxon>Bacteria</taxon>
        <taxon>Pseudomonadati</taxon>
        <taxon>Pseudomonadota</taxon>
        <taxon>Alphaproteobacteria</taxon>
        <taxon>Hyphomicrobiales</taxon>
        <taxon>Nitrobacteraceae</taxon>
        <taxon>Bradyrhizobium</taxon>
    </lineage>
</organism>
<comment type="function">
    <text evidence="1">Binds the lower part of the 30S subunit head. Binds mRNA in the 70S ribosome, positioning it for translation.</text>
</comment>
<comment type="subunit">
    <text evidence="1">Part of the 30S ribosomal subunit. Forms a tight complex with proteins S10 and S14.</text>
</comment>
<comment type="similarity">
    <text evidence="1">Belongs to the universal ribosomal protein uS3 family.</text>
</comment>
<gene>
    <name evidence="1" type="primary">rpsC</name>
    <name type="ordered locus">BRADO3072</name>
</gene>
<reference key="1">
    <citation type="journal article" date="2007" name="Science">
        <title>Legumes symbioses: absence of nod genes in photosynthetic bradyrhizobia.</title>
        <authorList>
            <person name="Giraud E."/>
            <person name="Moulin L."/>
            <person name="Vallenet D."/>
            <person name="Barbe V."/>
            <person name="Cytryn E."/>
            <person name="Avarre J.-C."/>
            <person name="Jaubert M."/>
            <person name="Simon D."/>
            <person name="Cartieaux F."/>
            <person name="Prin Y."/>
            <person name="Bena G."/>
            <person name="Hannibal L."/>
            <person name="Fardoux J."/>
            <person name="Kojadinovic M."/>
            <person name="Vuillet L."/>
            <person name="Lajus A."/>
            <person name="Cruveiller S."/>
            <person name="Rouy Z."/>
            <person name="Mangenot S."/>
            <person name="Segurens B."/>
            <person name="Dossat C."/>
            <person name="Franck W.L."/>
            <person name="Chang W.-S."/>
            <person name="Saunders E."/>
            <person name="Bruce D."/>
            <person name="Richardson P."/>
            <person name="Normand P."/>
            <person name="Dreyfus B."/>
            <person name="Pignol D."/>
            <person name="Stacey G."/>
            <person name="Emerich D."/>
            <person name="Vermeglio A."/>
            <person name="Medigue C."/>
            <person name="Sadowsky M."/>
        </authorList>
    </citation>
    <scope>NUCLEOTIDE SEQUENCE [LARGE SCALE GENOMIC DNA]</scope>
    <source>
        <strain>ORS 278</strain>
    </source>
</reference>
<evidence type="ECO:0000255" key="1">
    <source>
        <dbReference type="HAMAP-Rule" id="MF_01309"/>
    </source>
</evidence>
<evidence type="ECO:0000256" key="2">
    <source>
        <dbReference type="SAM" id="MobiDB-lite"/>
    </source>
</evidence>
<evidence type="ECO:0000305" key="3"/>